<evidence type="ECO:0000256" key="1">
    <source>
        <dbReference type="SAM" id="MobiDB-lite"/>
    </source>
</evidence>
<organism>
    <name type="scientific">Arabidopsis thaliana</name>
    <name type="common">Mouse-ear cress</name>
    <dbReference type="NCBI Taxonomy" id="3702"/>
    <lineage>
        <taxon>Eukaryota</taxon>
        <taxon>Viridiplantae</taxon>
        <taxon>Streptophyta</taxon>
        <taxon>Embryophyta</taxon>
        <taxon>Tracheophyta</taxon>
        <taxon>Spermatophyta</taxon>
        <taxon>Magnoliopsida</taxon>
        <taxon>eudicotyledons</taxon>
        <taxon>Gunneridae</taxon>
        <taxon>Pentapetalae</taxon>
        <taxon>rosids</taxon>
        <taxon>malvids</taxon>
        <taxon>Brassicales</taxon>
        <taxon>Brassicaceae</taxon>
        <taxon>Camelineae</taxon>
        <taxon>Arabidopsis</taxon>
    </lineage>
</organism>
<reference key="1">
    <citation type="journal article" date="1999" name="Nature">
        <title>Sequence and analysis of chromosome 2 of the plant Arabidopsis thaliana.</title>
        <authorList>
            <person name="Lin X."/>
            <person name="Kaul S."/>
            <person name="Rounsley S.D."/>
            <person name="Shea T.P."/>
            <person name="Benito M.-I."/>
            <person name="Town C.D."/>
            <person name="Fujii C.Y."/>
            <person name="Mason T.M."/>
            <person name="Bowman C.L."/>
            <person name="Barnstead M.E."/>
            <person name="Feldblyum T.V."/>
            <person name="Buell C.R."/>
            <person name="Ketchum K.A."/>
            <person name="Lee J.J."/>
            <person name="Ronning C.M."/>
            <person name="Koo H.L."/>
            <person name="Moffat K.S."/>
            <person name="Cronin L.A."/>
            <person name="Shen M."/>
            <person name="Pai G."/>
            <person name="Van Aken S."/>
            <person name="Umayam L."/>
            <person name="Tallon L.J."/>
            <person name="Gill J.E."/>
            <person name="Adams M.D."/>
            <person name="Carrera A.J."/>
            <person name="Creasy T.H."/>
            <person name="Goodman H.M."/>
            <person name="Somerville C.R."/>
            <person name="Copenhaver G.P."/>
            <person name="Preuss D."/>
            <person name="Nierman W.C."/>
            <person name="White O."/>
            <person name="Eisen J.A."/>
            <person name="Salzberg S.L."/>
            <person name="Fraser C.M."/>
            <person name="Venter J.C."/>
        </authorList>
    </citation>
    <scope>NUCLEOTIDE SEQUENCE [LARGE SCALE GENOMIC DNA]</scope>
    <source>
        <strain>cv. Columbia</strain>
    </source>
</reference>
<reference key="2">
    <citation type="journal article" date="2017" name="Plant J.">
        <title>Araport11: a complete reannotation of the Arabidopsis thaliana reference genome.</title>
        <authorList>
            <person name="Cheng C.Y."/>
            <person name="Krishnakumar V."/>
            <person name="Chan A.P."/>
            <person name="Thibaud-Nissen F."/>
            <person name="Schobel S."/>
            <person name="Town C.D."/>
        </authorList>
    </citation>
    <scope>GENOME REANNOTATION</scope>
    <source>
        <strain>cv. Columbia</strain>
    </source>
</reference>
<reference key="3">
    <citation type="journal article" date="2005" name="Plant Physiol.">
        <title>Analysis of the cDNAs of hypothetical genes on Arabidopsis chromosome 2 reveals numerous transcript variants.</title>
        <authorList>
            <person name="Xiao Y.-L."/>
            <person name="Smith S.R."/>
            <person name="Ishmael N."/>
            <person name="Redman J.C."/>
            <person name="Kumar N."/>
            <person name="Monaghan E.L."/>
            <person name="Ayele M."/>
            <person name="Haas B.J."/>
            <person name="Wu H.C."/>
            <person name="Town C.D."/>
        </authorList>
    </citation>
    <scope>NUCLEOTIDE SEQUENCE [LARGE SCALE MRNA]</scope>
    <source>
        <strain>cv. Columbia</strain>
    </source>
</reference>
<accession>Q9ZW38</accession>
<accession>Q84RE4</accession>
<keyword id="KW-0880">Kelch repeat</keyword>
<keyword id="KW-1185">Reference proteome</keyword>
<keyword id="KW-0677">Repeat</keyword>
<feature type="chain" id="PRO_0000283196" description="F-box/kelch-repeat protein At2g29600">
    <location>
        <begin position="1"/>
        <end position="415"/>
    </location>
</feature>
<feature type="domain" description="F-box">
    <location>
        <begin position="56"/>
        <end position="103"/>
    </location>
</feature>
<feature type="repeat" description="Kelch 1">
    <location>
        <begin position="161"/>
        <end position="208"/>
    </location>
</feature>
<feature type="repeat" description="Kelch 2">
    <location>
        <begin position="210"/>
        <end position="254"/>
    </location>
</feature>
<feature type="repeat" description="Kelch 3">
    <location>
        <begin position="260"/>
        <end position="309"/>
    </location>
</feature>
<feature type="repeat" description="Kelch 4">
    <location>
        <begin position="311"/>
        <end position="355"/>
    </location>
</feature>
<feature type="region of interest" description="Disordered" evidence="1">
    <location>
        <begin position="1"/>
        <end position="58"/>
    </location>
</feature>
<feature type="compositionally biased region" description="Basic and acidic residues" evidence="1">
    <location>
        <begin position="19"/>
        <end position="45"/>
    </location>
</feature>
<sequence>MASISETSDDGSNGGDPNQKPEEPHKNPQEGKEEENQNEKPKEDDHQEEEVENVPQIPPQMPLELIVSTIATLRRCHYPTLSLLSDSFRQVISSVDLFQTRSLIGSTEPVLYTLITFTSPNFEEPRWFILQRRNNTSLQLSLVTSLPPMFPGCTTVTIGHKIYVMGGLRSLNRRAKTVFVIDCRFHTWRYLQEMQVARSYAASAVIDGMIYVVGGSTKRSDDWVEVFNVETNTWENVPSVLSPYGRSKAPFNVHFVLDNKIYILDGNNRVAYDLRGRRWEDWGPAGNQLGYFWQVLYCVVDNLLYAVVPDHLHVTPIVVYDPREMGWRPVMGVDYLPNLVYSESRMTNFGGKLMILGCYQSQARFDYYGEVNVWCVEVALERREDGEIWGKVQSLSLVNKFRKSPVFVLSRTVTV</sequence>
<protein>
    <recommendedName>
        <fullName>F-box/kelch-repeat protein At2g29600</fullName>
    </recommendedName>
</protein>
<name>FBK36_ARATH</name>
<dbReference type="EMBL" id="AC004561">
    <property type="protein sequence ID" value="AAC95179.1"/>
    <property type="molecule type" value="Genomic_DNA"/>
</dbReference>
<dbReference type="EMBL" id="CP002685">
    <property type="protein sequence ID" value="AEC08277.1"/>
    <property type="molecule type" value="Genomic_DNA"/>
</dbReference>
<dbReference type="EMBL" id="AY247814">
    <property type="protein sequence ID" value="AAO89208.1"/>
    <property type="molecule type" value="mRNA"/>
</dbReference>
<dbReference type="PIR" id="C84698">
    <property type="entry name" value="C84698"/>
</dbReference>
<dbReference type="RefSeq" id="NP_180520.1">
    <property type="nucleotide sequence ID" value="NM_128513.2"/>
</dbReference>
<dbReference type="SMR" id="Q9ZW38"/>
<dbReference type="iPTMnet" id="Q9ZW38"/>
<dbReference type="PaxDb" id="3702-AT2G29600.1"/>
<dbReference type="EnsemblPlants" id="AT2G29600.1">
    <property type="protein sequence ID" value="AT2G29600.1"/>
    <property type="gene ID" value="AT2G29600"/>
</dbReference>
<dbReference type="GeneID" id="817509"/>
<dbReference type="Gramene" id="AT2G29600.1">
    <property type="protein sequence ID" value="AT2G29600.1"/>
    <property type="gene ID" value="AT2G29600"/>
</dbReference>
<dbReference type="KEGG" id="ath:AT2G29600"/>
<dbReference type="Araport" id="AT2G29600"/>
<dbReference type="TAIR" id="AT2G29600"/>
<dbReference type="eggNOG" id="KOG1072">
    <property type="taxonomic scope" value="Eukaryota"/>
</dbReference>
<dbReference type="HOGENOM" id="CLU_032521_1_2_1"/>
<dbReference type="InParanoid" id="Q9ZW38"/>
<dbReference type="PhylomeDB" id="Q9ZW38"/>
<dbReference type="PRO" id="PR:Q9ZW38"/>
<dbReference type="Proteomes" id="UP000006548">
    <property type="component" value="Chromosome 2"/>
</dbReference>
<dbReference type="ExpressionAtlas" id="Q9ZW38">
    <property type="expression patterns" value="differential"/>
</dbReference>
<dbReference type="Gene3D" id="2.120.10.80">
    <property type="entry name" value="Kelch-type beta propeller"/>
    <property type="match status" value="1"/>
</dbReference>
<dbReference type="InterPro" id="IPR050354">
    <property type="entry name" value="F-box/kelch-repeat_ARATH"/>
</dbReference>
<dbReference type="InterPro" id="IPR015915">
    <property type="entry name" value="Kelch-typ_b-propeller"/>
</dbReference>
<dbReference type="InterPro" id="IPR006652">
    <property type="entry name" value="Kelch_1"/>
</dbReference>
<dbReference type="PANTHER" id="PTHR24414:SF65">
    <property type="entry name" value="F-BOX DOMAIN-CONTAINING PROTEIN"/>
    <property type="match status" value="1"/>
</dbReference>
<dbReference type="PANTHER" id="PTHR24414">
    <property type="entry name" value="F-BOX/KELCH-REPEAT PROTEIN SKIP4"/>
    <property type="match status" value="1"/>
</dbReference>
<dbReference type="Pfam" id="PF25210">
    <property type="entry name" value="Kelch_FKB95"/>
    <property type="match status" value="1"/>
</dbReference>
<dbReference type="SMART" id="SM00612">
    <property type="entry name" value="Kelch"/>
    <property type="match status" value="2"/>
</dbReference>
<dbReference type="SUPFAM" id="SSF117281">
    <property type="entry name" value="Kelch motif"/>
    <property type="match status" value="1"/>
</dbReference>
<proteinExistence type="evidence at transcript level"/>
<gene>
    <name type="ordered locus">At2g29600</name>
    <name type="ORF">F16P2.2</name>
</gene>